<name>P85A_MOUSE</name>
<comment type="function">
    <text evidence="1 23 25">Binds to activated (phosphorylated) protein-Tyr kinases, through its SH2 domain, and acts as an adapter, mediating the association of the p110 catalytic unit to the plasma membrane. Necessary for the insulin-stimulated increase in glucose uptake and glycogen synthesis in insulin-sensitive tissues (PubMed:27708159). Plays an important role in signaling in response to FGFR1, FGFR2, FGFR3, FGFR4, KITLG/SCF, KIT, PDGFRA and PDGFRB. Likewise, plays a role in ITGB2 signaling (By similarity). Modulates the cellular response to ER stress by promoting nuclear translocation of XBP1 isoform 2 in a ER stress- and/or insulin-dependent manner during metabolic overloading in the liver and hence plays a role in glucose tolerance improvement (PubMed:20348926).</text>
</comment>
<comment type="subunit">
    <text evidence="2 3 4 9 10 11 12 13 14 15 16 17 18 19 20 21 22 23 24 26 27 28 29">Heterodimer of a regulatory subunit PIK3R1 and a p110 catalytic subunit (PIK3CA, PIK3CB or PIK3CD). Interacts (via SH2 domains) with CCDC88A/GIV (tyrosine-phosphorylated form); the interaction enables recruitment of PIK3R1 to the EGFR receptor, enhancing PI3K activity and cell migration (By similarity). Interacts with XBP1 isoform 2; the interaction is direct and induces translocation of XBP1 isoform 2 into the nucleus in a ER stress- and/or insulin-dependent but PI3K-independent manner (PubMed:20348926). Interacts with PIK3R2; the interaction is dissociated in an insulin-dependent manner (PubMed:20348926). Interacts with phosphorylated LAT, LAX1 and TRAT1 upon TCR activation. The SH2 domains interact with the YTHM motif of phosphorylated INSR in vitro. Also interacts with tyrosine-phosphorylated IGF1R in vitro. Interacts with IRS1, IRS2 and phosphorylated IRS4, as well as with NISCH and HCST (By similarity). Interacts with phosphorylated TOM1L1. Interacts with phosphorylated LIME1 upon TCR or BCR activation. Interacts with CBLB. Interacts with CD28 and CD3Z upon T-cell activation. Interacts with SOCS7 and HCST. Interacts with AXL, FASLG, FGR, HCK, KIT and BCR. Interacts with PTK2/FAK1 (By similarity). Interacts with PDGFRB (tyrosine phosphorylated) (By similarity). Interacts with NTRK1 (phosphorylated upon ligand-binding) (By similarity). Interacts (via SH2 domain) with CSF1R (tyrosine phosphorylated) (PubMed:9312046). Interacts with FER. Interacts with FGFR1, FGFR2, FGFR3 and FGFR4 (phosphorylated) (Probable). Interacts with PDGFRA (tyrosine phosphorylated). Interacts with LYN (via SH3 domain); this enhances enzyme activity. Interacts with ERBB4. Interacts (via SH2 domain) with TEK/TIE2 (tyrosine phosphorylated). Interacts with FAM83B; activates the PI3K/AKT signaling cascade (By similarity). Interacts with APPL1 and APPL2 (PubMed:25328665). Interacts with SRC (By similarity). Interacts with ALOX5; this interaction bridges ALOX5 with CD40 after CD40 ligation in B cells and leads to the production of reactive oxygen species (ROS) (By similarity). Interacts with TYK2 (By similarity). Interacts with nephrin NPHN1; the interaction is reduced by high glucose levels (By similarity). Interacts with CD28 (By similarity). Interacts with ICOS (PubMed:19915142).</text>
</comment>
<comment type="interaction">
    <interactant intactId="EBI-641764">
        <id>P26450</id>
    </interactant>
    <interactant intactId="EBI-643930">
        <id>O88665</id>
        <label>Brd7</label>
    </interactant>
    <organismsDiffer>false</organismsDiffer>
    <experiments>11</experiments>
</comment>
<comment type="interaction">
    <interactant intactId="EBI-641764">
        <id>P26450</id>
    </interactant>
    <interactant intactId="EBI-296494">
        <id>Q62448</id>
        <label>Eif4g2</label>
    </interactant>
    <organismsDiffer>false</organismsDiffer>
    <experiments>3</experiments>
</comment>
<comment type="interaction">
    <interactant intactId="EBI-641764">
        <id>P26450</id>
    </interactant>
    <interactant intactId="EBI-16721736">
        <id>Q9WVS0</id>
        <label>Icos</label>
    </interactant>
    <organismsDiffer>false</organismsDiffer>
    <experiments>2</experiments>
</comment>
<comment type="interaction">
    <interactant intactId="EBI-641764">
        <id>P26450</id>
    </interactant>
    <interactant intactId="EBI-400825">
        <id>P35569</id>
        <label>Irs1</label>
    </interactant>
    <organismsDiffer>false</organismsDiffer>
    <experiments>3</experiments>
</comment>
<comment type="interaction">
    <interactant intactId="EBI-641764">
        <id>P26450</id>
    </interactant>
    <interactant intactId="EBI-641748">
        <id>P42337</id>
        <label>Pik3ca</label>
    </interactant>
    <organismsDiffer>false</organismsDiffer>
    <experiments>7</experiments>
</comment>
<comment type="interaction">
    <interactant intactId="EBI-641764">
        <id>P26450</id>
    </interactant>
    <interactant intactId="EBI-644672">
        <id>Q8BTI9</id>
        <label>Pik3cb</label>
    </interactant>
    <organismsDiffer>false</organismsDiffer>
    <experiments>5</experiments>
</comment>
<comment type="interaction">
    <interactant intactId="EBI-641764">
        <id>P26450</id>
    </interactant>
    <interactant intactId="EBI-6470774">
        <id>O35904-2</id>
        <label>Pik3cd</label>
    </interactant>
    <organismsDiffer>false</organismsDiffer>
    <experiments>2</experiments>
</comment>
<comment type="interaction">
    <interactant intactId="EBI-641764">
        <id>P26450</id>
    </interactant>
    <interactant intactId="EBI-774719">
        <id>Q8R5H6</id>
        <label>Wasf1</label>
    </interactant>
    <organismsDiffer>false</organismsDiffer>
    <experiments>2</experiments>
</comment>
<comment type="interaction">
    <interactant intactId="EBI-641764">
        <id>P26450</id>
    </interactant>
    <interactant intactId="EBI-375446">
        <id>Q8IZP0</id>
        <label>ABI1</label>
    </interactant>
    <organismsDiffer>true</organismsDiffer>
    <experiments>3</experiments>
</comment>
<comment type="domain">
    <text evidence="1">The SH3 domain mediates the binding to CBLB.</text>
</comment>
<comment type="PTM">
    <text evidence="16">Polyubiquitinated in T-cells by CBLB; which does not promote proteasomal degradation but impairs association with CD28 and CD3Z upon T-cell activation.</text>
</comment>
<comment type="PTM">
    <text evidence="1 9 10 15 28">Phosphorylated. Tyrosine phosphorylated in response to signaling by FGFR1, FGFR2, FGFR3 and FGFR4. Dephosphorylated by PTPRJ. Phosphorylated by PIK3CA at Ser-608; phosphorylation is stimulated by insulin and PDGF. The relevance of phosphorylation by PIK3CA is however unclear. Phosphorylated in response to KIT and KITLG/SCF. Phosphorylated by FGR (By similarity). Phosphorylated by CSF1R. Phosphorylated by ERBB4. Phosphorylated on tyrosine residues by TEK/TIE2.</text>
</comment>
<comment type="PTM">
    <text evidence="25">In adipose tissue, polyubiquitinated by the BCR(KBTBD2) E3 ubiquitin ligase complex; recognized by KBTBD2 through the SH2 domains, undergoes 'Lys-48'-linked polyubiquitination leading to its degradation.</text>
</comment>
<comment type="disruption phenotype">
    <text evidence="25">Double knockouts for KBTBD2 and PIK3R1 have increased body weight, normal fat storage, blood glucose and insulin levels.</text>
</comment>
<comment type="similarity">
    <text evidence="29">Belongs to the PI3K p85 subunit family.</text>
</comment>
<organism>
    <name type="scientific">Mus musculus</name>
    <name type="common">Mouse</name>
    <dbReference type="NCBI Taxonomy" id="10090"/>
    <lineage>
        <taxon>Eukaryota</taxon>
        <taxon>Metazoa</taxon>
        <taxon>Chordata</taxon>
        <taxon>Craniata</taxon>
        <taxon>Vertebrata</taxon>
        <taxon>Euteleostomi</taxon>
        <taxon>Mammalia</taxon>
        <taxon>Eutheria</taxon>
        <taxon>Euarchontoglires</taxon>
        <taxon>Glires</taxon>
        <taxon>Rodentia</taxon>
        <taxon>Myomorpha</taxon>
        <taxon>Muroidea</taxon>
        <taxon>Muridae</taxon>
        <taxon>Murinae</taxon>
        <taxon>Mus</taxon>
        <taxon>Mus</taxon>
    </lineage>
</organism>
<protein>
    <recommendedName>
        <fullName>Phosphatidylinositol 3-kinase regulatory subunit alpha</fullName>
        <shortName>PI3-kinase regulatory subunit alpha</shortName>
        <shortName>PI3K regulatory subunit alpha</shortName>
        <shortName>PtdIns-3-kinase regulatory subunit alpha</shortName>
    </recommendedName>
    <alternativeName>
        <fullName>Phosphatidylinositol 3-kinase 85 kDa regulatory subunit alpha</fullName>
        <shortName>PI3-kinase subunit p85-alpha</shortName>
        <shortName>PtdIns-3-kinase regulatory subunit p85-alpha</shortName>
    </alternativeName>
</protein>
<sequence length="724" mass="83517">MSAEGYQYRALYDYKKEREEDIDLHLGDILTVNKGSLVALGFSDGQEARPEDIGWLNGYNETTGERGDFPGTYVEYIGRKRISPPTPKPRPPRPLPVAPGSSKTEADTEQQALPLPDLAEQFAPPDVAPPLLIKLLEAIEKKGLECSTLYRTQSSSNPAELRQLLDCDAASVDLEMIDVHVLADAFKRYLADLPNPVIPVAVYNEMMSLAQELQSPEDCIQLLKKLIRLPNIPHQCWLTLQYLLKHFFKLSQASSKNLLNARVLSEIFSPVLFRFPAASSDNTEHLIKAIEILISTEWNERQPAPALPPKPPKPTTVANNSMNNNMSLQDAEWYWGDISREEVNEKLRDTADGTFLVRDASTKMHGDYTLTLRKGGNNKLIKIFHRDGKYGFSDPLTFNSVVELINHYRNESLAQYNPKLDVKLLYPVSKYQQDQVVKEDNIEAVGKKLHEYNTQFQEKSREYDRLYEEYTRTSQEIQMKRTAIEAFNETIKIFEEQCQTQERYSKEYIEKFKREGNEKEIQRIMHNHDKLKSRISEIIDSRRRLEEDLKKQAAEYREIDKRMNSIKPDLIQLRKTRDQYLMWLTQKGVRQKKLNEWLGNENTEDQYSLVEDDEDLPHHDEKTWNVGSSNRNKAENLLRGKRDGTFLVRESSKQGCYACSVVVDGEVKHCVINKTATGYGFAEPYNLYSSLKELVLHYQHTSLVQHNDSLNVTLAYPVYAQQRR</sequence>
<reference key="1">
    <citation type="journal article" date="1991" name="Cell">
        <title>cDNA cloning of a novel 85 kd protein that has SH2 domains and regulates binding of PI3-kinase to the PDGF beta-receptor.</title>
        <authorList>
            <person name="Escobedo J.A."/>
            <person name="Navankasattusas S."/>
            <person name="Kavanaugh W.M."/>
            <person name="Milfay D."/>
            <person name="Fried V.A."/>
            <person name="Williams L.T."/>
        </authorList>
    </citation>
    <scope>NUCLEOTIDE SEQUENCE [MRNA]</scope>
    <scope>PARTIAL PROTEIN SEQUENCE</scope>
    <source>
        <strain>BALB/cJ</strain>
    </source>
</reference>
<reference key="2">
    <citation type="submission" date="2005-09" db="EMBL/GenBank/DDBJ databases">
        <authorList>
            <person name="Mural R.J."/>
            <person name="Adams M.D."/>
            <person name="Myers E.W."/>
            <person name="Smith H.O."/>
            <person name="Venter J.C."/>
        </authorList>
    </citation>
    <scope>NUCLEOTIDE SEQUENCE [LARGE SCALE GENOMIC DNA]</scope>
</reference>
<reference key="3">
    <citation type="journal article" date="2004" name="Genome Res.">
        <title>The status, quality, and expansion of the NIH full-length cDNA project: the Mammalian Gene Collection (MGC).</title>
        <authorList>
            <consortium name="The MGC Project Team"/>
        </authorList>
    </citation>
    <scope>NUCLEOTIDE SEQUENCE [LARGE SCALE MRNA]</scope>
    <source>
        <strain>FVB/N</strain>
        <tissue>Mammary tumor</tissue>
    </source>
</reference>
<reference key="4">
    <citation type="journal article" date="1991" name="Mol. Cell. Biol.">
        <title>Tyrosine mutations within the alpha platelet-derived growth factor receptor kinase insert domain abrogate receptor-associated phosphatidylinositol-3 kinase activity without affecting mitogenic or chemotactic signal transduction.</title>
        <authorList>
            <person name="Yu J.C."/>
            <person name="Heidaran M.A."/>
            <person name="Pierce J.H."/>
            <person name="Gutkind J.S."/>
            <person name="Lombardi D."/>
            <person name="Ruggiero M."/>
            <person name="Aaronson S.A."/>
        </authorList>
    </citation>
    <scope>INTERACTION WITH PDGFRA</scope>
    <scope>ACTIVATION BY PDGFRA</scope>
</reference>
<reference key="5">
    <citation type="journal article" date="1994" name="Science">
        <title>Activation of phosphatidylinositol-3' kinase by Src-family kinase SH3 binding to the p85 subunit.</title>
        <authorList>
            <person name="Pleiman C.M."/>
            <person name="Hertz W.M."/>
            <person name="Cambier J.C."/>
        </authorList>
    </citation>
    <scope>INTERACTION WITH LYN</scope>
</reference>
<reference key="6">
    <citation type="journal article" date="1996" name="Mol. Cell. Biol.">
        <title>Phosphorylation of tyrosine 720 in the platelet-derived growth factor alpha receptor is required for binding of Grb2 and SHP-2 but not for activation of Ras or cell proliferation.</title>
        <authorList>
            <person name="Bazenet C.E."/>
            <person name="Gelderloos J.A."/>
            <person name="Kazlauskas A."/>
        </authorList>
    </citation>
    <scope>INTERACTION WITH PDGFRA</scope>
</reference>
<reference key="7">
    <citation type="journal article" date="1997" name="EMBO J.">
        <title>Sequential activation of phoshatidylinositol 3-kinase and phospholipase C-gamma2 by the M-CSF receptor is necessary for differentiation signaling.</title>
        <authorList>
            <person name="Bourette R.P."/>
            <person name="Myles G.M."/>
            <person name="Choi J.L."/>
            <person name="Rohrschneider L.R."/>
        </authorList>
    </citation>
    <scope>PHOSPHORYLATION</scope>
    <scope>INTERACTION WITH CSF1R</scope>
</reference>
<reference key="8">
    <citation type="journal article" date="1999" name="J. Biol. Chem.">
        <title>Identification of Tek/Tie2 binding partners. Binding to a multifunctional docking site mediates cell survival and migration.</title>
        <authorList>
            <person name="Jones N."/>
            <person name="Master Z."/>
            <person name="Jones J."/>
            <person name="Bouchard D."/>
            <person name="Gunji Y."/>
            <person name="Sasaki H."/>
            <person name="Daly R."/>
            <person name="Alitalo K."/>
            <person name="Dumont D.J."/>
        </authorList>
    </citation>
    <scope>INTERACTION WITH TEK/TIE2</scope>
    <scope>PHOSPHORYLATION</scope>
</reference>
<reference key="9">
    <citation type="journal article" date="1999" name="J. Immunol.">
        <title>KAP10, a novel transmembrane adapter protein genetically linked to DAP12 but with unique signaling properties.</title>
        <authorList>
            <person name="Chang C."/>
            <person name="Dietrich J."/>
            <person name="Harpur A.G."/>
            <person name="Lindquist J.A."/>
            <person name="Haude A."/>
            <person name="Loke Y.W."/>
            <person name="King A."/>
            <person name="Colonna M."/>
            <person name="Trowsdale J."/>
            <person name="Wilson M.J."/>
        </authorList>
    </citation>
    <scope>INTERACTION WITH HCST</scope>
</reference>
<reference key="10">
    <citation type="journal article" date="1999" name="Oncogene">
        <title>Characterization of a naturally occurring ErbB4 isoform that does not bind or activate phosphatidyl inositol 3-kinase.</title>
        <authorList>
            <person name="Elenius K."/>
            <person name="Choi C.J."/>
            <person name="Paul S."/>
            <person name="Santiestevan E."/>
            <person name="Nishi E."/>
            <person name="Klagsbrun M."/>
        </authorList>
    </citation>
    <scope>INTERACTION WITH ERBB4</scope>
    <scope>PHOSPHORYLATION</scope>
    <scope>CATALYTIC ACTIVITY</scope>
</reference>
<reference key="11">
    <citation type="journal article" date="2000" name="J. Biol. Chem.">
        <title>The protein-tyrosine kinase fer associates with signaling complexes containing insulin receptor substrate-1 and phosphatidylinositol 3-kinase.</title>
        <authorList>
            <person name="Iwanishi M."/>
            <person name="Czech M.P."/>
            <person name="Cherniack A.D."/>
        </authorList>
    </citation>
    <scope>INTERACTION WITH FER</scope>
</reference>
<reference key="12">
    <citation type="journal article" date="2000" name="Nature">
        <title>Negative regulation of lymphocyte activation and autoimmunity by the molecular adaptor Cbl-b.</title>
        <authorList>
            <person name="Bachmaier K."/>
            <person name="Krawczyk C."/>
            <person name="Kozieradzki I."/>
            <person name="Kong Y.-Y."/>
            <person name="Sasaki T."/>
            <person name="Oliveira-dos-Santos A."/>
            <person name="Mariathasan S."/>
            <person name="Bouchard D."/>
            <person name="Wakeham A."/>
            <person name="Itie A."/>
            <person name="Le J."/>
            <person name="Ohashi P.S."/>
            <person name="Sarosi I."/>
            <person name="Nishina H."/>
            <person name="Lipkowitz S."/>
            <person name="Penninger J.M."/>
        </authorList>
    </citation>
    <scope>INTERACTION WITH CBLB</scope>
</reference>
<reference key="13">
    <citation type="journal article" date="2001" name="Mol. Biol. Cell">
        <title>Identification of tyrosine residues in constitutively activated fibroblast growth factor receptor 3 involved in mitogenesis, Stat activation, and phosphatidylinositol 3-kinase activation.</title>
        <authorList>
            <person name="Hart K.C."/>
            <person name="Robertson S.C."/>
            <person name="Donoghue D.J."/>
        </authorList>
    </citation>
    <scope>FUNCTION</scope>
    <scope>ACTIVATION BY FGFR3</scope>
    <scope>INTERACTION WITH FGFR3</scope>
    <scope>PHOSPHORYLATION</scope>
</reference>
<reference key="14">
    <citation type="journal article" date="2001" name="Mol. Cell. Biol.">
        <title>Insulin receptor substrate 3 (IRS-3) and IRS-4 impair IRS-1- and IRS-2-mediated signaling.</title>
        <authorList>
            <person name="Tsuruzoe K."/>
            <person name="Emkey R."/>
            <person name="Kriauciunas K.M."/>
            <person name="Ueki K."/>
            <person name="Kahn C.R."/>
        </authorList>
    </citation>
    <scope>INTERACTION WITH IRS4</scope>
</reference>
<reference key="15">
    <citation type="journal article" date="2001" name="Nat. Immunol.">
        <title>Proteolysis-independent regulation of PI3K by Cbl-b-mediated ubiquitination in T cells.</title>
        <authorList>
            <person name="Fang D."/>
            <person name="Liu Y.-C."/>
        </authorList>
    </citation>
    <scope>INTERACTION WITH CD3Z AND CD28</scope>
    <scope>UBIQUITINATION</scope>
</reference>
<reference key="16">
    <citation type="journal article" date="2002" name="J. Biol. Chem.">
        <title>'Srcasm: a novel Src activating and signaling molecule.</title>
        <authorList>
            <person name="Seykora J.T."/>
            <person name="Mei L."/>
            <person name="Dotto G.P."/>
            <person name="Stein P.L."/>
        </authorList>
    </citation>
    <scope>INTERACTION WITH TOM1L1</scope>
</reference>
<reference key="17">
    <citation type="journal article" date="2002" name="Mol. Cell. Biol.">
        <title>SOCS-6 binds to insulin receptor substrate 4, and mice lacking the SOCS-6 gene exhibit mild growth retardation.</title>
        <authorList>
            <person name="Krebs D.L."/>
            <person name="Uren R.T."/>
            <person name="Metcalf D."/>
            <person name="Rakar S."/>
            <person name="Zhang J.-G."/>
            <person name="Starr R."/>
            <person name="De Souza D.P."/>
            <person name="Hanzinikolas K."/>
            <person name="Eyles J."/>
            <person name="Connolly L.M."/>
            <person name="Simpson R.J."/>
            <person name="Nicola N.A."/>
            <person name="Nicholson S.E."/>
            <person name="Baca M."/>
            <person name="Hilton D.J."/>
            <person name="Alexander W.S."/>
        </authorList>
    </citation>
    <scope>INTERACTION WITH SOCS7</scope>
</reference>
<reference key="18">
    <citation type="journal article" date="2003" name="J. Exp. Med.">
        <title>LIME, a novel transmembrane adaptor protein, associates with p56lck and mediates T cell activation.</title>
        <authorList>
            <person name="Hur E.M."/>
            <person name="Son M."/>
            <person name="Lee O.-H."/>
            <person name="Choi Y.B."/>
            <person name="Park C."/>
            <person name="Lee H."/>
            <person name="Yun Y."/>
        </authorList>
    </citation>
    <scope>INTERACTION WITH LIME1</scope>
</reference>
<reference key="19">
    <citation type="journal article" date="2005" name="Nat. Biotechnol.">
        <title>Immunoaffinity profiling of tyrosine phosphorylation in cancer cells.</title>
        <authorList>
            <person name="Rush J."/>
            <person name="Moritz A."/>
            <person name="Lee K.A."/>
            <person name="Guo A."/>
            <person name="Goss V.L."/>
            <person name="Spek E.J."/>
            <person name="Zhang H."/>
            <person name="Zha X.-M."/>
            <person name="Polakiewicz R.D."/>
            <person name="Comb M.J."/>
        </authorList>
    </citation>
    <scope>IDENTIFICATION BY MASS SPECTROMETRY [LARGE SCALE ANALYSIS]</scope>
</reference>
<reference key="20">
    <citation type="journal article" date="2006" name="Blood">
        <title>LIME acts as a transmembrane adapter mediating BCR-dependent B-cell activation.</title>
        <authorList>
            <person name="Ahn E."/>
            <person name="Lee H."/>
            <person name="Yun Y."/>
        </authorList>
    </citation>
    <scope>INTERACTION WITH LIME1</scope>
</reference>
<reference key="21">
    <citation type="journal article" date="2007" name="J. Immunol.">
        <title>Quantitative time-resolved phosphoproteomic analysis of mast cell signaling.</title>
        <authorList>
            <person name="Cao L."/>
            <person name="Yu K."/>
            <person name="Banh C."/>
            <person name="Nguyen V."/>
            <person name="Ritz A."/>
            <person name="Raphael B.J."/>
            <person name="Kawakami Y."/>
            <person name="Kawakami T."/>
            <person name="Salomon A.R."/>
        </authorList>
    </citation>
    <scope>PHOSPHORYLATION [LARGE SCALE ANALYSIS] AT TYR-467</scope>
    <scope>IDENTIFICATION BY MASS SPECTROMETRY [LARGE SCALE ANALYSIS]</scope>
    <source>
        <tissue>Mast cell</tissue>
    </source>
</reference>
<reference key="22">
    <citation type="journal article" date="2008" name="J. Proteome Res.">
        <title>Large-scale identification and evolution indexing of tyrosine phosphorylation sites from murine brain.</title>
        <authorList>
            <person name="Ballif B.A."/>
            <person name="Carey G.R."/>
            <person name="Sunyaev S.R."/>
            <person name="Gygi S.P."/>
        </authorList>
    </citation>
    <scope>PHOSPHORYLATION [LARGE SCALE ANALYSIS] AT TYR-467</scope>
    <scope>IDENTIFICATION BY MASS SPECTROMETRY [LARGE SCALE ANALYSIS]</scope>
    <source>
        <tissue>Brain</tissue>
    </source>
</reference>
<reference key="23">
    <citation type="journal article" date="2009" name="Proc. Natl. Acad. Sci. U.S.A.">
        <title>Inducible costimulator promotes helper T-cell differentiation through phosphoinositide 3-kinase.</title>
        <authorList>
            <person name="Gigoux M."/>
            <person name="Shang J."/>
            <person name="Pak Y."/>
            <person name="Xu M."/>
            <person name="Choe J."/>
            <person name="Mak T.W."/>
            <person name="Suh W.K."/>
        </authorList>
    </citation>
    <scope>INTERACTION WITH ICOS</scope>
</reference>
<reference key="24">
    <citation type="journal article" date="2010" name="Cell">
        <title>A tissue-specific atlas of mouse protein phosphorylation and expression.</title>
        <authorList>
            <person name="Huttlin E.L."/>
            <person name="Jedrychowski M.P."/>
            <person name="Elias J.E."/>
            <person name="Goswami T."/>
            <person name="Rad R."/>
            <person name="Beausoleil S.A."/>
            <person name="Villen J."/>
            <person name="Haas W."/>
            <person name="Sowa M.E."/>
            <person name="Gygi S.P."/>
        </authorList>
    </citation>
    <scope>PHOSPHORYLATION [LARGE SCALE ANALYSIS] AT TYR-580</scope>
    <scope>IDENTIFICATION BY MASS SPECTROMETRY [LARGE SCALE ANALYSIS]</scope>
    <source>
        <tissue>Brain</tissue>
        <tissue>Brown adipose tissue</tissue>
        <tissue>Heart</tissue>
        <tissue>Kidney</tissue>
        <tissue>Liver</tissue>
        <tissue>Lung</tissue>
        <tissue>Spleen</tissue>
    </source>
</reference>
<reference key="25">
    <citation type="journal article" date="2010" name="Nat. Med.">
        <title>The regulatory subunits of PI3K, p85alpha and p85beta, interact with XBP-1 and increase its nuclear translocation.</title>
        <authorList>
            <person name="Park S.W."/>
            <person name="Zhou Y."/>
            <person name="Lee J."/>
            <person name="Lu A."/>
            <person name="Sun C."/>
            <person name="Chung J."/>
            <person name="Ueki K."/>
            <person name="Ozcan U."/>
        </authorList>
    </citation>
    <scope>FUNCTION</scope>
    <scope>INTERACTION WITH PIK3R2 AND XBP1</scope>
</reference>
<reference key="26">
    <citation type="journal article" date="2014" name="Cell Biosci.">
        <title>Absence of Appl2 sensitizes endotoxin shock through activation of PI3K/Akt pathway.</title>
        <authorList>
            <person name="Mao L."/>
            <person name="Lin W."/>
            <person name="Nie T."/>
            <person name="Hui X."/>
            <person name="Gao X."/>
            <person name="Li K."/>
            <person name="Ding M."/>
            <person name="Tang X."/>
            <person name="Li P."/>
            <person name="Wang Y."/>
            <person name="Xu A."/>
            <person name="Liu P."/>
            <person name="Wu D."/>
        </authorList>
    </citation>
    <scope>INTERACTION WITH APPL2 AND APPL1</scope>
</reference>
<reference key="27">
    <citation type="journal article" date="2016" name="Proc. Natl. Acad. Sci. U.S.A.">
        <title>Insulin resistance and diabetes caused by genetic or diet-induced KBTBD2 deficiency in mice.</title>
        <authorList>
            <person name="Zhang Z."/>
            <person name="Turer E."/>
            <person name="Li X."/>
            <person name="Zhan X."/>
            <person name="Choi M."/>
            <person name="Tang M."/>
            <person name="Press A."/>
            <person name="Smith S.R."/>
            <person name="Divoux A."/>
            <person name="Moresco E.M."/>
            <person name="Beutler B."/>
        </authorList>
    </citation>
    <scope>FUNCTION</scope>
    <scope>UBQUITINATION</scope>
    <scope>DISRUPTION PHENOTYPE</scope>
</reference>
<accession>P26450</accession>
<accession>Q8K3B3</accession>
<evidence type="ECO:0000250" key="1"/>
<evidence type="ECO:0000250" key="2">
    <source>
        <dbReference type="UniProtKB" id="P23727"/>
    </source>
</evidence>
<evidence type="ECO:0000250" key="3">
    <source>
        <dbReference type="UniProtKB" id="P27986"/>
    </source>
</evidence>
<evidence type="ECO:0000250" key="4">
    <source>
        <dbReference type="UniProtKB" id="Q63787"/>
    </source>
</evidence>
<evidence type="ECO:0000255" key="5">
    <source>
        <dbReference type="PROSITE-ProRule" id="PRU00172"/>
    </source>
</evidence>
<evidence type="ECO:0000255" key="6">
    <source>
        <dbReference type="PROSITE-ProRule" id="PRU00191"/>
    </source>
</evidence>
<evidence type="ECO:0000255" key="7">
    <source>
        <dbReference type="PROSITE-ProRule" id="PRU00192"/>
    </source>
</evidence>
<evidence type="ECO:0000256" key="8">
    <source>
        <dbReference type="SAM" id="MobiDB-lite"/>
    </source>
</evidence>
<evidence type="ECO:0000269" key="9">
    <source>
    </source>
</evidence>
<evidence type="ECO:0000269" key="10">
    <source>
    </source>
</evidence>
<evidence type="ECO:0000269" key="11">
    <source>
    </source>
</evidence>
<evidence type="ECO:0000269" key="12">
    <source>
    </source>
</evidence>
<evidence type="ECO:0000269" key="13">
    <source>
    </source>
</evidence>
<evidence type="ECO:0000269" key="14">
    <source>
    </source>
</evidence>
<evidence type="ECO:0000269" key="15">
    <source>
    </source>
</evidence>
<evidence type="ECO:0000269" key="16">
    <source>
    </source>
</evidence>
<evidence type="ECO:0000269" key="17">
    <source>
    </source>
</evidence>
<evidence type="ECO:0000269" key="18">
    <source>
    </source>
</evidence>
<evidence type="ECO:0000269" key="19">
    <source>
    </source>
</evidence>
<evidence type="ECO:0000269" key="20">
    <source>
    </source>
</evidence>
<evidence type="ECO:0000269" key="21">
    <source>
    </source>
</evidence>
<evidence type="ECO:0000269" key="22">
    <source>
    </source>
</evidence>
<evidence type="ECO:0000269" key="23">
    <source>
    </source>
</evidence>
<evidence type="ECO:0000269" key="24">
    <source>
    </source>
</evidence>
<evidence type="ECO:0000269" key="25">
    <source>
    </source>
</evidence>
<evidence type="ECO:0000269" key="26">
    <source>
    </source>
</evidence>
<evidence type="ECO:0000269" key="27">
    <source>
    </source>
</evidence>
<evidence type="ECO:0000269" key="28">
    <source>
    </source>
</evidence>
<evidence type="ECO:0000305" key="29"/>
<evidence type="ECO:0007744" key="30">
    <source>
    </source>
</evidence>
<evidence type="ECO:0007744" key="31">
    <source>
    </source>
</evidence>
<evidence type="ECO:0007744" key="32">
    <source>
    </source>
</evidence>
<dbReference type="EMBL" id="M60651">
    <property type="protein sequence ID" value="AAA39886.1"/>
    <property type="molecule type" value="mRNA"/>
</dbReference>
<dbReference type="EMBL" id="CH466567">
    <property type="protein sequence ID" value="EDL00772.1"/>
    <property type="molecule type" value="Genomic_DNA"/>
</dbReference>
<dbReference type="EMBL" id="BC026146">
    <property type="protein sequence ID" value="AAH26146.1"/>
    <property type="molecule type" value="mRNA"/>
</dbReference>
<dbReference type="CCDS" id="CCDS36769.1"/>
<dbReference type="RefSeq" id="NP_001070963.1">
    <property type="nucleotide sequence ID" value="NM_001077495.2"/>
</dbReference>
<dbReference type="BMRB" id="P26450"/>
<dbReference type="SMR" id="P26450"/>
<dbReference type="BioGRID" id="202162">
    <property type="interactions" value="64"/>
</dbReference>
<dbReference type="CORUM" id="P26450"/>
<dbReference type="DIP" id="DIP-39593N"/>
<dbReference type="FunCoup" id="P26450">
    <property type="interactions" value="3254"/>
</dbReference>
<dbReference type="IntAct" id="P26450">
    <property type="interactions" value="46"/>
</dbReference>
<dbReference type="MINT" id="P26450"/>
<dbReference type="STRING" id="10090.ENSMUSP00000056774"/>
<dbReference type="ChEMBL" id="CHEMBL4106132"/>
<dbReference type="ChEMBL" id="CHEMBL4106142"/>
<dbReference type="ChEMBL" id="CHEMBL4106168"/>
<dbReference type="GlyGen" id="P26450">
    <property type="glycosylation" value="1 site, 1 O-linked glycan (1 site)"/>
</dbReference>
<dbReference type="iPTMnet" id="P26450"/>
<dbReference type="PhosphoSitePlus" id="P26450"/>
<dbReference type="SwissPalm" id="P26450"/>
<dbReference type="jPOST" id="P26450"/>
<dbReference type="PaxDb" id="10090-ENSMUSP00000056774"/>
<dbReference type="PeptideAtlas" id="P26450"/>
<dbReference type="ProteomicsDB" id="287757"/>
<dbReference type="Pumba" id="P26450"/>
<dbReference type="Antibodypedia" id="717">
    <property type="antibodies" value="1119 antibodies from 47 providers"/>
</dbReference>
<dbReference type="DNASU" id="18708"/>
<dbReference type="Ensembl" id="ENSMUST00000055518.13">
    <property type="protein sequence ID" value="ENSMUSP00000056774.7"/>
    <property type="gene ID" value="ENSMUSG00000041417.16"/>
</dbReference>
<dbReference type="GeneID" id="18708"/>
<dbReference type="KEGG" id="mmu:18708"/>
<dbReference type="UCSC" id="uc007rrt.3">
    <property type="organism name" value="mouse"/>
</dbReference>
<dbReference type="AGR" id="MGI:97583"/>
<dbReference type="CTD" id="5295"/>
<dbReference type="MGI" id="MGI:97583">
    <property type="gene designation" value="Pik3r1"/>
</dbReference>
<dbReference type="VEuPathDB" id="HostDB:ENSMUSG00000041417"/>
<dbReference type="eggNOG" id="KOG4637">
    <property type="taxonomic scope" value="Eukaryota"/>
</dbReference>
<dbReference type="GeneTree" id="ENSGT00940000155553"/>
<dbReference type="HOGENOM" id="CLU_007031_1_0_1"/>
<dbReference type="InParanoid" id="P26450"/>
<dbReference type="OMA" id="EMIDVQV"/>
<dbReference type="OrthoDB" id="3175255at2759"/>
<dbReference type="PhylomeDB" id="P26450"/>
<dbReference type="TreeFam" id="TF102033"/>
<dbReference type="Reactome" id="R-MMU-109704">
    <property type="pathway name" value="PI3K Cascade"/>
</dbReference>
<dbReference type="Reactome" id="R-MMU-112399">
    <property type="pathway name" value="IRS-mediated signalling"/>
</dbReference>
<dbReference type="Reactome" id="R-MMU-114604">
    <property type="pathway name" value="GPVI-mediated activation cascade"/>
</dbReference>
<dbReference type="Reactome" id="R-MMU-1250342">
    <property type="pathway name" value="PI3K events in ERBB4 signaling"/>
</dbReference>
<dbReference type="Reactome" id="R-MMU-1257604">
    <property type="pathway name" value="PIP3 activates AKT signaling"/>
</dbReference>
<dbReference type="Reactome" id="R-MMU-1266695">
    <property type="pathway name" value="Interleukin-7 signaling"/>
</dbReference>
<dbReference type="Reactome" id="R-MMU-1433557">
    <property type="pathway name" value="Signaling by SCF-KIT"/>
</dbReference>
<dbReference type="Reactome" id="R-MMU-1660499">
    <property type="pathway name" value="Synthesis of PIPs at the plasma membrane"/>
</dbReference>
<dbReference type="Reactome" id="R-MMU-180292">
    <property type="pathway name" value="GAB1 signalosome"/>
</dbReference>
<dbReference type="Reactome" id="R-MMU-186763">
    <property type="pathway name" value="Downstream signal transduction"/>
</dbReference>
<dbReference type="Reactome" id="R-MMU-1963642">
    <property type="pathway name" value="PI3K events in ERBB2 signaling"/>
</dbReference>
<dbReference type="Reactome" id="R-MMU-198203">
    <property type="pathway name" value="PI3K/AKT activation"/>
</dbReference>
<dbReference type="Reactome" id="R-MMU-201556">
    <property type="pathway name" value="Signaling by ALK"/>
</dbReference>
<dbReference type="Reactome" id="R-MMU-202424">
    <property type="pathway name" value="Downstream TCR signaling"/>
</dbReference>
<dbReference type="Reactome" id="R-MMU-2029485">
    <property type="pathway name" value="Role of phospholipids in phagocytosis"/>
</dbReference>
<dbReference type="Reactome" id="R-MMU-210993">
    <property type="pathway name" value="Tie2 Signaling"/>
</dbReference>
<dbReference type="Reactome" id="R-MMU-2424491">
    <property type="pathway name" value="DAP12 signaling"/>
</dbReference>
<dbReference type="Reactome" id="R-MMU-2730905">
    <property type="pathway name" value="Role of LAT2/NTAL/LAB on calcium mobilization"/>
</dbReference>
<dbReference type="Reactome" id="R-MMU-389357">
    <property type="pathway name" value="CD28 dependent PI3K/Akt signaling"/>
</dbReference>
<dbReference type="Reactome" id="R-MMU-416476">
    <property type="pathway name" value="G alpha (q) signalling events"/>
</dbReference>
<dbReference type="Reactome" id="R-MMU-430116">
    <property type="pathway name" value="GP1b-IX-V activation signalling"/>
</dbReference>
<dbReference type="Reactome" id="R-MMU-4420097">
    <property type="pathway name" value="VEGFA-VEGFR2 Pathway"/>
</dbReference>
<dbReference type="Reactome" id="R-MMU-512988">
    <property type="pathway name" value="Interleukin-3, Interleukin-5 and GM-CSF signaling"/>
</dbReference>
<dbReference type="Reactome" id="R-MMU-5654689">
    <property type="pathway name" value="PI-3K cascade:FGFR1"/>
</dbReference>
<dbReference type="Reactome" id="R-MMU-5654695">
    <property type="pathway name" value="PI-3K cascade:FGFR2"/>
</dbReference>
<dbReference type="Reactome" id="R-MMU-5654710">
    <property type="pathway name" value="PI-3K cascade:FGFR3"/>
</dbReference>
<dbReference type="Reactome" id="R-MMU-5654720">
    <property type="pathway name" value="PI-3K cascade:FGFR4"/>
</dbReference>
<dbReference type="Reactome" id="R-MMU-5673001">
    <property type="pathway name" value="RAF/MAP kinase cascade"/>
</dbReference>
<dbReference type="Reactome" id="R-MMU-6811558">
    <property type="pathway name" value="PI5P, PP2A and IER3 Regulate PI3K/AKT Signaling"/>
</dbReference>
<dbReference type="Reactome" id="R-MMU-8851907">
    <property type="pathway name" value="MET activates PI3K/AKT signaling"/>
</dbReference>
<dbReference type="Reactome" id="R-MMU-8853659">
    <property type="pathway name" value="RET signaling"/>
</dbReference>
<dbReference type="Reactome" id="R-MMU-8980692">
    <property type="pathway name" value="RHOA GTPase cycle"/>
</dbReference>
<dbReference type="Reactome" id="R-MMU-9009391">
    <property type="pathway name" value="Extra-nuclear estrogen signaling"/>
</dbReference>
<dbReference type="Reactome" id="R-MMU-9013026">
    <property type="pathway name" value="RHOB GTPase cycle"/>
</dbReference>
<dbReference type="Reactome" id="R-MMU-9013106">
    <property type="pathway name" value="RHOC GTPase cycle"/>
</dbReference>
<dbReference type="Reactome" id="R-MMU-9013148">
    <property type="pathway name" value="CDC42 GTPase cycle"/>
</dbReference>
<dbReference type="Reactome" id="R-MMU-9013149">
    <property type="pathway name" value="RAC1 GTPase cycle"/>
</dbReference>
<dbReference type="Reactome" id="R-MMU-9013404">
    <property type="pathway name" value="RAC2 GTPase cycle"/>
</dbReference>
<dbReference type="Reactome" id="R-MMU-9013405">
    <property type="pathway name" value="RHOD GTPase cycle"/>
</dbReference>
<dbReference type="Reactome" id="R-MMU-9013408">
    <property type="pathway name" value="RHOG GTPase cycle"/>
</dbReference>
<dbReference type="Reactome" id="R-MMU-9013409">
    <property type="pathway name" value="RHOJ GTPase cycle"/>
</dbReference>
<dbReference type="Reactome" id="R-MMU-9013420">
    <property type="pathway name" value="RHOU GTPase cycle"/>
</dbReference>
<dbReference type="Reactome" id="R-MMU-9013423">
    <property type="pathway name" value="RAC3 GTPase cycle"/>
</dbReference>
<dbReference type="Reactome" id="R-MMU-9013424">
    <property type="pathway name" value="RHOV GTPase cycle"/>
</dbReference>
<dbReference type="Reactome" id="R-MMU-9027276">
    <property type="pathway name" value="Erythropoietin activates Phosphoinositide-3-kinase (PI3K)"/>
</dbReference>
<dbReference type="Reactome" id="R-MMU-9035034">
    <property type="pathway name" value="RHOF GTPase cycle"/>
</dbReference>
<dbReference type="Reactome" id="R-MMU-912526">
    <property type="pathway name" value="Interleukin receptor SHC signaling"/>
</dbReference>
<dbReference type="Reactome" id="R-MMU-912631">
    <property type="pathway name" value="Regulation of signaling by CBL"/>
</dbReference>
<dbReference type="Reactome" id="R-MMU-9607240">
    <property type="pathway name" value="FLT3 Signaling"/>
</dbReference>
<dbReference type="Reactome" id="R-MMU-9696264">
    <property type="pathway name" value="RND3 GTPase cycle"/>
</dbReference>
<dbReference type="Reactome" id="R-MMU-9696270">
    <property type="pathway name" value="RND2 GTPase cycle"/>
</dbReference>
<dbReference type="Reactome" id="R-MMU-9696273">
    <property type="pathway name" value="RND1 GTPase cycle"/>
</dbReference>
<dbReference type="Reactome" id="R-MMU-983695">
    <property type="pathway name" value="Antigen activates B Cell Receptor (BCR) leading to generation of second messengers"/>
</dbReference>
<dbReference type="Reactome" id="R-MMU-9842663">
    <property type="pathway name" value="Signaling by LTK"/>
</dbReference>
<dbReference type="Reactome" id="R-MMU-9927354">
    <property type="pathway name" value="Co-stimulation by ICOS"/>
</dbReference>
<dbReference type="BioGRID-ORCS" id="18708">
    <property type="hits" value="2 hits in 79 CRISPR screens"/>
</dbReference>
<dbReference type="CD-CODE" id="01CA17F3">
    <property type="entry name" value="Centrosome"/>
</dbReference>
<dbReference type="ChiTaRS" id="Pik3r1">
    <property type="organism name" value="mouse"/>
</dbReference>
<dbReference type="PRO" id="PR:P26450"/>
<dbReference type="Proteomes" id="UP000000589">
    <property type="component" value="Chromosome 13"/>
</dbReference>
<dbReference type="RNAct" id="P26450">
    <property type="molecule type" value="protein"/>
</dbReference>
<dbReference type="Bgee" id="ENSMUSG00000041417">
    <property type="expression patterns" value="Expressed in lacrimal gland and 265 other cell types or tissues"/>
</dbReference>
<dbReference type="ExpressionAtlas" id="P26450">
    <property type="expression patterns" value="baseline and differential"/>
</dbReference>
<dbReference type="GO" id="GO:0005911">
    <property type="term" value="C:cell-cell junction"/>
    <property type="evidence" value="ECO:0000314"/>
    <property type="project" value="MGI"/>
</dbReference>
<dbReference type="GO" id="GO:0005801">
    <property type="term" value="C:cis-Golgi network"/>
    <property type="evidence" value="ECO:0000314"/>
    <property type="project" value="MGI"/>
</dbReference>
<dbReference type="GO" id="GO:0005737">
    <property type="term" value="C:cytoplasm"/>
    <property type="evidence" value="ECO:0000314"/>
    <property type="project" value="UniProtKB"/>
</dbReference>
<dbReference type="GO" id="GO:0005829">
    <property type="term" value="C:cytosol"/>
    <property type="evidence" value="ECO:0000314"/>
    <property type="project" value="UniProtKB"/>
</dbReference>
<dbReference type="GO" id="GO:0016020">
    <property type="term" value="C:membrane"/>
    <property type="evidence" value="ECO:0000314"/>
    <property type="project" value="UniProtKB"/>
</dbReference>
<dbReference type="GO" id="GO:0005634">
    <property type="term" value="C:nucleus"/>
    <property type="evidence" value="ECO:0000314"/>
    <property type="project" value="UniProtKB"/>
</dbReference>
<dbReference type="GO" id="GO:1990578">
    <property type="term" value="C:perinuclear endoplasmic reticulum membrane"/>
    <property type="evidence" value="ECO:0000314"/>
    <property type="project" value="MGI"/>
</dbReference>
<dbReference type="GO" id="GO:0048471">
    <property type="term" value="C:perinuclear region of cytoplasm"/>
    <property type="evidence" value="ECO:0000314"/>
    <property type="project" value="BHF-UCL"/>
</dbReference>
<dbReference type="GO" id="GO:0005942">
    <property type="term" value="C:phosphatidylinositol 3-kinase complex"/>
    <property type="evidence" value="ECO:0000304"/>
    <property type="project" value="MGI"/>
</dbReference>
<dbReference type="GO" id="GO:0005943">
    <property type="term" value="C:phosphatidylinositol 3-kinase complex, class IA"/>
    <property type="evidence" value="ECO:0000250"/>
    <property type="project" value="UniProtKB"/>
</dbReference>
<dbReference type="GO" id="GO:0016303">
    <property type="term" value="F:1-phosphatidylinositol-3-kinase activity"/>
    <property type="evidence" value="ECO:0000304"/>
    <property type="project" value="MGI"/>
</dbReference>
<dbReference type="GO" id="GO:0046935">
    <property type="term" value="F:1-phosphatidylinositol-3-kinase regulator activity"/>
    <property type="evidence" value="ECO:0000314"/>
    <property type="project" value="MGI"/>
</dbReference>
<dbReference type="GO" id="GO:0043125">
    <property type="term" value="F:ErbB-3 class receptor binding"/>
    <property type="evidence" value="ECO:0000250"/>
    <property type="project" value="UniProtKB"/>
</dbReference>
<dbReference type="GO" id="GO:0043559">
    <property type="term" value="F:insulin binding"/>
    <property type="evidence" value="ECO:0007669"/>
    <property type="project" value="Ensembl"/>
</dbReference>
<dbReference type="GO" id="GO:0005158">
    <property type="term" value="F:insulin receptor binding"/>
    <property type="evidence" value="ECO:0000250"/>
    <property type="project" value="UniProtKB"/>
</dbReference>
<dbReference type="GO" id="GO:0043560">
    <property type="term" value="F:insulin receptor substrate binding"/>
    <property type="evidence" value="ECO:0000353"/>
    <property type="project" value="UniProtKB"/>
</dbReference>
<dbReference type="GO" id="GO:0005159">
    <property type="term" value="F:insulin-like growth factor receptor binding"/>
    <property type="evidence" value="ECO:0000250"/>
    <property type="project" value="UniProtKB"/>
</dbReference>
<dbReference type="GO" id="GO:0019209">
    <property type="term" value="F:kinase activator activity"/>
    <property type="evidence" value="ECO:0000314"/>
    <property type="project" value="MGI"/>
</dbReference>
<dbReference type="GO" id="GO:0005168">
    <property type="term" value="F:neurotrophin TRKA receptor binding"/>
    <property type="evidence" value="ECO:0007669"/>
    <property type="project" value="Ensembl"/>
</dbReference>
<dbReference type="GO" id="GO:0035014">
    <property type="term" value="F:phosphatidylinositol 3-kinase regulator activity"/>
    <property type="evidence" value="ECO:0000250"/>
    <property type="project" value="UniProtKB"/>
</dbReference>
<dbReference type="GO" id="GO:0036312">
    <property type="term" value="F:phosphatidylinositol 3-kinase regulatory subunit binding"/>
    <property type="evidence" value="ECO:0000353"/>
    <property type="project" value="ParkinsonsUK-UCL"/>
</dbReference>
<dbReference type="GO" id="GO:0001784">
    <property type="term" value="F:phosphotyrosine residue binding"/>
    <property type="evidence" value="ECO:0007669"/>
    <property type="project" value="Ensembl"/>
</dbReference>
<dbReference type="GO" id="GO:0046982">
    <property type="term" value="F:protein heterodimerization activity"/>
    <property type="evidence" value="ECO:0000353"/>
    <property type="project" value="ParkinsonsUK-UCL"/>
</dbReference>
<dbReference type="GO" id="GO:0019903">
    <property type="term" value="F:protein phosphatase binding"/>
    <property type="evidence" value="ECO:0007669"/>
    <property type="project" value="Ensembl"/>
</dbReference>
<dbReference type="GO" id="GO:0030183">
    <property type="term" value="P:B cell differentiation"/>
    <property type="evidence" value="ECO:0000315"/>
    <property type="project" value="MGI"/>
</dbReference>
<dbReference type="GO" id="GO:0032869">
    <property type="term" value="P:cellular response to insulin stimulus"/>
    <property type="evidence" value="ECO:0000314"/>
    <property type="project" value="UniProtKB"/>
</dbReference>
<dbReference type="GO" id="GO:0034644">
    <property type="term" value="P:cellular response to UV"/>
    <property type="evidence" value="ECO:0000315"/>
    <property type="project" value="MGI"/>
</dbReference>
<dbReference type="GO" id="GO:0008625">
    <property type="term" value="P:extrinsic apoptotic signaling pathway via death domain receptors"/>
    <property type="evidence" value="ECO:0000315"/>
    <property type="project" value="MGI"/>
</dbReference>
<dbReference type="GO" id="GO:0060396">
    <property type="term" value="P:growth hormone receptor signaling pathway"/>
    <property type="evidence" value="ECO:0007669"/>
    <property type="project" value="Ensembl"/>
</dbReference>
<dbReference type="GO" id="GO:0008286">
    <property type="term" value="P:insulin receptor signaling pathway"/>
    <property type="evidence" value="ECO:0000314"/>
    <property type="project" value="MGI"/>
</dbReference>
<dbReference type="GO" id="GO:0048009">
    <property type="term" value="P:insulin-like growth factor receptor signaling pathway"/>
    <property type="evidence" value="ECO:0000314"/>
    <property type="project" value="MGI"/>
</dbReference>
<dbReference type="GO" id="GO:0035655">
    <property type="term" value="P:interleukin-18-mediated signaling pathway"/>
    <property type="evidence" value="ECO:0007669"/>
    <property type="project" value="Ensembl"/>
</dbReference>
<dbReference type="GO" id="GO:0001678">
    <property type="term" value="P:intracellular glucose homeostasis"/>
    <property type="evidence" value="ECO:0000314"/>
    <property type="project" value="UniProtKB"/>
</dbReference>
<dbReference type="GO" id="GO:0008630">
    <property type="term" value="P:intrinsic apoptotic signaling pathway in response to DNA damage"/>
    <property type="evidence" value="ECO:0000315"/>
    <property type="project" value="MGI"/>
</dbReference>
<dbReference type="GO" id="GO:0097529">
    <property type="term" value="P:myeloid leukocyte migration"/>
    <property type="evidence" value="ECO:0000316"/>
    <property type="project" value="MGI"/>
</dbReference>
<dbReference type="GO" id="GO:0042267">
    <property type="term" value="P:natural killer cell mediated cytotoxicity"/>
    <property type="evidence" value="ECO:0007669"/>
    <property type="project" value="Ensembl"/>
</dbReference>
<dbReference type="GO" id="GO:0043066">
    <property type="term" value="P:negative regulation of apoptotic process"/>
    <property type="evidence" value="ECO:0000314"/>
    <property type="project" value="MGI"/>
</dbReference>
<dbReference type="GO" id="GO:0007162">
    <property type="term" value="P:negative regulation of cell adhesion"/>
    <property type="evidence" value="ECO:0000314"/>
    <property type="project" value="MGI"/>
</dbReference>
<dbReference type="GO" id="GO:0001953">
    <property type="term" value="P:negative regulation of cell-matrix adhesion"/>
    <property type="evidence" value="ECO:0000316"/>
    <property type="project" value="MGI"/>
</dbReference>
<dbReference type="GO" id="GO:0045671">
    <property type="term" value="P:negative regulation of osteoclast differentiation"/>
    <property type="evidence" value="ECO:0000316"/>
    <property type="project" value="MGI"/>
</dbReference>
<dbReference type="GO" id="GO:0051497">
    <property type="term" value="P:negative regulation of stress fiber assembly"/>
    <property type="evidence" value="ECO:0000314"/>
    <property type="project" value="BHF-UCL"/>
</dbReference>
<dbReference type="GO" id="GO:0030316">
    <property type="term" value="P:osteoclast differentiation"/>
    <property type="evidence" value="ECO:0000316"/>
    <property type="project" value="MGI"/>
</dbReference>
<dbReference type="GO" id="GO:0043491">
    <property type="term" value="P:phosphatidylinositol 3-kinase/protein kinase B signal transduction"/>
    <property type="evidence" value="ECO:0007669"/>
    <property type="project" value="Ensembl"/>
</dbReference>
<dbReference type="GO" id="GO:0046854">
    <property type="term" value="P:phosphatidylinositol phosphate biosynthetic process"/>
    <property type="evidence" value="ECO:0000250"/>
    <property type="project" value="UniProtKB"/>
</dbReference>
<dbReference type="GO" id="GO:1900103">
    <property type="term" value="P:positive regulation of endoplasmic reticulum unfolded protein response"/>
    <property type="evidence" value="ECO:0000250"/>
    <property type="project" value="UniProtKB"/>
</dbReference>
<dbReference type="GO" id="GO:0051491">
    <property type="term" value="P:positive regulation of filopodium assembly"/>
    <property type="evidence" value="ECO:0000314"/>
    <property type="project" value="BHF-UCL"/>
</dbReference>
<dbReference type="GO" id="GO:0120183">
    <property type="term" value="P:positive regulation of focal adhesion disassembly"/>
    <property type="evidence" value="ECO:0000314"/>
    <property type="project" value="BHF-UCL"/>
</dbReference>
<dbReference type="GO" id="GO:0010592">
    <property type="term" value="P:positive regulation of lamellipodium assembly"/>
    <property type="evidence" value="ECO:0000314"/>
    <property type="project" value="BHF-UCL"/>
</dbReference>
<dbReference type="GO" id="GO:0002687">
    <property type="term" value="P:positive regulation of leukocyte migration"/>
    <property type="evidence" value="ECO:0000316"/>
    <property type="project" value="MGI"/>
</dbReference>
<dbReference type="GO" id="GO:0042307">
    <property type="term" value="P:positive regulation of protein import into nucleus"/>
    <property type="evidence" value="ECO:0000315"/>
    <property type="project" value="UniProtKB"/>
</dbReference>
<dbReference type="GO" id="GO:0033120">
    <property type="term" value="P:positive regulation of RNA splicing"/>
    <property type="evidence" value="ECO:0000250"/>
    <property type="project" value="UniProtKB"/>
</dbReference>
<dbReference type="GO" id="GO:0048661">
    <property type="term" value="P:positive regulation of smooth muscle cell proliferation"/>
    <property type="evidence" value="ECO:0007669"/>
    <property type="project" value="Ensembl"/>
</dbReference>
<dbReference type="GO" id="GO:0045944">
    <property type="term" value="P:positive regulation of transcription by RNA polymerase II"/>
    <property type="evidence" value="ECO:0000314"/>
    <property type="project" value="UniProtKB"/>
</dbReference>
<dbReference type="GO" id="GO:0032760">
    <property type="term" value="P:positive regulation of tumor necrosis factor production"/>
    <property type="evidence" value="ECO:0000315"/>
    <property type="project" value="MGI"/>
</dbReference>
<dbReference type="GO" id="GO:0006606">
    <property type="term" value="P:protein import into nucleus"/>
    <property type="evidence" value="ECO:0000315"/>
    <property type="project" value="MGI"/>
</dbReference>
<dbReference type="GO" id="GO:0050821">
    <property type="term" value="P:protein stabilization"/>
    <property type="evidence" value="ECO:0000250"/>
    <property type="project" value="UniProtKB"/>
</dbReference>
<dbReference type="GO" id="GO:1903076">
    <property type="term" value="P:regulation of protein localization to plasma membrane"/>
    <property type="evidence" value="ECO:0000314"/>
    <property type="project" value="MGI"/>
</dbReference>
<dbReference type="GO" id="GO:0051492">
    <property type="term" value="P:regulation of stress fiber assembly"/>
    <property type="evidence" value="ECO:0000315"/>
    <property type="project" value="MGI"/>
</dbReference>
<dbReference type="GO" id="GO:0034143">
    <property type="term" value="P:regulation of toll-like receptor 4 signaling pathway"/>
    <property type="evidence" value="ECO:0007669"/>
    <property type="project" value="Ensembl"/>
</dbReference>
<dbReference type="GO" id="GO:0034976">
    <property type="term" value="P:response to endoplasmic reticulum stress"/>
    <property type="evidence" value="ECO:0000314"/>
    <property type="project" value="UniProtKB"/>
</dbReference>
<dbReference type="GO" id="GO:0061470">
    <property type="term" value="P:T follicular helper cell differentiation"/>
    <property type="evidence" value="ECO:0007669"/>
    <property type="project" value="Ensembl"/>
</dbReference>
<dbReference type="GO" id="GO:0006366">
    <property type="term" value="P:transcription by RNA polymerase II"/>
    <property type="evidence" value="ECO:0000315"/>
    <property type="project" value="MGI"/>
</dbReference>
<dbReference type="CDD" id="cd12924">
    <property type="entry name" value="iSH2_PIK3R1"/>
    <property type="match status" value="1"/>
</dbReference>
<dbReference type="CDD" id="cd04388">
    <property type="entry name" value="RhoGAP_p85"/>
    <property type="match status" value="1"/>
</dbReference>
<dbReference type="CDD" id="cd09930">
    <property type="entry name" value="SH2_cSH2_p85_like"/>
    <property type="match status" value="1"/>
</dbReference>
<dbReference type="CDD" id="cd09942">
    <property type="entry name" value="SH2_nSH2_p85_like"/>
    <property type="match status" value="1"/>
</dbReference>
<dbReference type="CDD" id="cd11910">
    <property type="entry name" value="SH3_PI3K_p85alpha"/>
    <property type="match status" value="1"/>
</dbReference>
<dbReference type="FunFam" id="1.10.555.10:FF:000035">
    <property type="entry name" value="Phosphatidylinositol 3-kinase regulatory subunit alpha"/>
    <property type="match status" value="1"/>
</dbReference>
<dbReference type="FunFam" id="3.30.505.10:FF:000006">
    <property type="entry name" value="Phosphatidylinositol 3-kinase regulatory subunit alpha"/>
    <property type="match status" value="1"/>
</dbReference>
<dbReference type="FunFam" id="3.30.505.10:FF:000014">
    <property type="entry name" value="Phosphatidylinositol 3-kinase regulatory subunit alpha"/>
    <property type="match status" value="1"/>
</dbReference>
<dbReference type="FunFam" id="2.30.30.40:FF:000075">
    <property type="entry name" value="phosphatidylinositol 3-kinase regulatory subunit alpha"/>
    <property type="match status" value="1"/>
</dbReference>
<dbReference type="FunFam" id="1.10.287.1490:FF:000001">
    <property type="entry name" value="Putative phosphatidylinositol 3-kinase regulatory subunit alpha"/>
    <property type="match status" value="1"/>
</dbReference>
<dbReference type="Gene3D" id="1.10.287.1490">
    <property type="match status" value="1"/>
</dbReference>
<dbReference type="Gene3D" id="1.10.555.10">
    <property type="entry name" value="Rho GTPase activation protein"/>
    <property type="match status" value="1"/>
</dbReference>
<dbReference type="Gene3D" id="3.30.505.10">
    <property type="entry name" value="SH2 domain"/>
    <property type="match status" value="2"/>
</dbReference>
<dbReference type="Gene3D" id="2.30.30.40">
    <property type="entry name" value="SH3 Domains"/>
    <property type="match status" value="1"/>
</dbReference>
<dbReference type="InterPro" id="IPR044124">
    <property type="entry name" value="ISH2_PIK3R1"/>
</dbReference>
<dbReference type="InterPro" id="IPR032498">
    <property type="entry name" value="PI3K_P85_iSH2"/>
</dbReference>
<dbReference type="InterPro" id="IPR035591">
    <property type="entry name" value="PI3K_p85alpha_SH3"/>
</dbReference>
<dbReference type="InterPro" id="IPR035020">
    <property type="entry name" value="PI3kinase_P85_cSH2"/>
</dbReference>
<dbReference type="InterPro" id="IPR035022">
    <property type="entry name" value="PI3kinase_P85_nSH2"/>
</dbReference>
<dbReference type="InterPro" id="IPR008936">
    <property type="entry name" value="Rho_GTPase_activation_prot"/>
</dbReference>
<dbReference type="InterPro" id="IPR000198">
    <property type="entry name" value="RhoGAP_dom"/>
</dbReference>
<dbReference type="InterPro" id="IPR000980">
    <property type="entry name" value="SH2"/>
</dbReference>
<dbReference type="InterPro" id="IPR036860">
    <property type="entry name" value="SH2_dom_sf"/>
</dbReference>
<dbReference type="InterPro" id="IPR036028">
    <property type="entry name" value="SH3-like_dom_sf"/>
</dbReference>
<dbReference type="InterPro" id="IPR001452">
    <property type="entry name" value="SH3_domain"/>
</dbReference>
<dbReference type="PANTHER" id="PTHR10155">
    <property type="entry name" value="PHOSPHATIDYLINOSITOL 3-KINASE REGULATORY SUBUNIT"/>
    <property type="match status" value="1"/>
</dbReference>
<dbReference type="PANTHER" id="PTHR10155:SF1">
    <property type="entry name" value="PHOSPHATIDYLINOSITOL 3-KINASE REGULATORY SUBUNIT BETA"/>
    <property type="match status" value="1"/>
</dbReference>
<dbReference type="Pfam" id="PF16454">
    <property type="entry name" value="PI3K_P85_iSH2"/>
    <property type="match status" value="1"/>
</dbReference>
<dbReference type="Pfam" id="PF00620">
    <property type="entry name" value="RhoGAP"/>
    <property type="match status" value="1"/>
</dbReference>
<dbReference type="Pfam" id="PF00017">
    <property type="entry name" value="SH2"/>
    <property type="match status" value="2"/>
</dbReference>
<dbReference type="PRINTS" id="PR00678">
    <property type="entry name" value="PI3KINASEP85"/>
</dbReference>
<dbReference type="PRINTS" id="PR00401">
    <property type="entry name" value="SH2DOMAIN"/>
</dbReference>
<dbReference type="SMART" id="SM00324">
    <property type="entry name" value="RhoGAP"/>
    <property type="match status" value="1"/>
</dbReference>
<dbReference type="SMART" id="SM00252">
    <property type="entry name" value="SH2"/>
    <property type="match status" value="2"/>
</dbReference>
<dbReference type="SMART" id="SM00326">
    <property type="entry name" value="SH3"/>
    <property type="match status" value="1"/>
</dbReference>
<dbReference type="SUPFAM" id="SSF48350">
    <property type="entry name" value="GTPase activation domain, GAP"/>
    <property type="match status" value="1"/>
</dbReference>
<dbReference type="SUPFAM" id="SSF55550">
    <property type="entry name" value="SH2 domain"/>
    <property type="match status" value="2"/>
</dbReference>
<dbReference type="SUPFAM" id="SSF50044">
    <property type="entry name" value="SH3-domain"/>
    <property type="match status" value="1"/>
</dbReference>
<dbReference type="PROSITE" id="PS50238">
    <property type="entry name" value="RHOGAP"/>
    <property type="match status" value="1"/>
</dbReference>
<dbReference type="PROSITE" id="PS50001">
    <property type="entry name" value="SH2"/>
    <property type="match status" value="2"/>
</dbReference>
<dbReference type="PROSITE" id="PS50002">
    <property type="entry name" value="SH3"/>
    <property type="match status" value="1"/>
</dbReference>
<proteinExistence type="evidence at protein level"/>
<feature type="initiator methionine" description="Removed" evidence="3">
    <location>
        <position position="1"/>
    </location>
</feature>
<feature type="chain" id="PRO_0000080759" description="Phosphatidylinositol 3-kinase regulatory subunit alpha">
    <location>
        <begin position="2"/>
        <end position="724"/>
    </location>
</feature>
<feature type="domain" description="SH3" evidence="7">
    <location>
        <begin position="3"/>
        <end position="79"/>
    </location>
</feature>
<feature type="domain" description="Rho-GAP" evidence="5">
    <location>
        <begin position="113"/>
        <end position="301"/>
    </location>
</feature>
<feature type="domain" description="SH2 1" evidence="6">
    <location>
        <begin position="333"/>
        <end position="428"/>
    </location>
</feature>
<feature type="domain" description="SH2 2" evidence="6">
    <location>
        <begin position="624"/>
        <end position="718"/>
    </location>
</feature>
<feature type="region of interest" description="Disordered" evidence="8">
    <location>
        <begin position="80"/>
        <end position="109"/>
    </location>
</feature>
<feature type="compositionally biased region" description="Pro residues" evidence="8">
    <location>
        <begin position="84"/>
        <end position="97"/>
    </location>
</feature>
<feature type="site" description="Arginine finger; crucial for GTP hydrolysis by stabilizing the transition state" evidence="5">
    <location>
        <position position="151"/>
    </location>
</feature>
<feature type="modified residue" description="N-acetylserine" evidence="3">
    <location>
        <position position="2"/>
    </location>
</feature>
<feature type="modified residue" description="Phosphoserine" evidence="3">
    <location>
        <position position="154"/>
    </location>
</feature>
<feature type="modified residue" description="Phosphoserine" evidence="3">
    <location>
        <position position="279"/>
    </location>
</feature>
<feature type="modified residue" description="Phosphotyrosine" evidence="30 31">
    <location>
        <position position="467"/>
    </location>
</feature>
<feature type="modified residue" description="Phosphotyrosine" evidence="32">
    <location>
        <position position="580"/>
    </location>
</feature>
<feature type="modified residue" description="Phosphoserine" evidence="2">
    <location>
        <position position="608"/>
    </location>
</feature>
<feature type="sequence conflict" description="In Ref. 1; AAA39886." evidence="29" ref="1">
    <original>Q</original>
    <variation>P</variation>
    <location>
        <position position="46"/>
    </location>
</feature>
<feature type="sequence conflict" description="In Ref. 1; AAA39886." evidence="29" ref="1">
    <original>E</original>
    <variation>G</variation>
    <location>
        <position position="510"/>
    </location>
</feature>
<keyword id="KW-0007">Acetylation</keyword>
<keyword id="KW-0903">Direct protein sequencing</keyword>
<keyword id="KW-0343">GTPase activation</keyword>
<keyword id="KW-0597">Phosphoprotein</keyword>
<keyword id="KW-0653">Protein transport</keyword>
<keyword id="KW-1185">Reference proteome</keyword>
<keyword id="KW-0677">Repeat</keyword>
<keyword id="KW-0727">SH2 domain</keyword>
<keyword id="KW-0728">SH3 domain</keyword>
<keyword id="KW-0346">Stress response</keyword>
<keyword id="KW-0813">Transport</keyword>
<keyword id="KW-0832">Ubl conjugation</keyword>
<gene>
    <name type="primary">Pik3r1</name>
</gene>